<name>G3BP2_MOUSE</name>
<sequence length="482" mass="54088">MVMEKPSPLLVGREFVRQYYTLLNKAPEYLHRFYGRNSSYVHGGVDASGKPQEAVYGQNDIHHKVLSLNFSECHTKIRHVDAHATLSDGVVVQVMGLLSNSGQPERKFMQTFVLAPEGSVPNKFYVHNDMFRYEDEVFGDSEPELDEESEDEVEEEQEDRQPSPEPVQENANSAYYDAHPVTNGIEEPLEESSHEPEPEPESETKTEELKPQVEEKHLEELEEKSATPPPAEPASLPQEPPKAFSWASVTSKNLPPSGTVSSSGIPPHVKAPVSQPRVDAKPEVQSQPPRVREQRPRERPGFPPRGPRPGRGDMEQNDSDNRRIIRYPDSHQLFVGNLPHDIDENELKEFFMSFGNVVELRINTKGVGGKLPNFGFVVFDDSEPVQRILIAKPIMFRGEVRLNVEEKKTRAARERETRGGGDDRRDIRRNDRGPGGPRGIVGGGMMRDRDGRGPPPRGGMTQKLGSGRGTGQMEGRFTGQRR</sequence>
<protein>
    <recommendedName>
        <fullName>Ras GTPase-activating protein-binding protein 2</fullName>
        <shortName>G3BP-2</shortName>
    </recommendedName>
    <alternativeName>
        <fullName>GAP SH3 domain-binding protein 2</fullName>
    </alternativeName>
</protein>
<proteinExistence type="evidence at protein level"/>
<accession>P97379</accession>
<accession>Q3UL55</accession>
<accession>Q9R1B8</accession>
<gene>
    <name type="primary">G3bp2</name>
</gene>
<comment type="function">
    <text evidence="1 2">Scaffold protein that plays an essential role in cytoplasmic stress granule formation which acts as a platform for antiviral signaling. Plays an essential role in stress granule formation. Stress granules are membraneless compartments that store mRNAs and proteins, such as stalled translation pre-initiation complexes, in response to stress (By similarity). Promotes formation of stress granules phase-separated membraneless compartment by undergoing liquid-liquid phase separation (LLPS) upon unfolded RNA-binding: functions as a molecular switch that triggers RNA-dependent LLPS in response to a rise in intracellular free RNA concentrations (By similarity).</text>
</comment>
<comment type="activity regulation">
    <text evidence="1">Under physiological conditions, G3BP2 adopts a compact state that is stabilized by intramolecular interactions between the RG-rich and the acidic regions that inhibit phase separation. Upon stress, polysomes disassemble and mRNAs are released in an unfolded protein-free state. Binding of unfolded mRNA to G3BP2 outcompetes the intramolecular interactions and RNA-bound G3BP2 adopts an expanded conformation in which the RG-rich region becomes exposed to engage in protein-protein and protein-RNA interactions, allowing physical cross-linking of RNA molecules to form protein-RNA condensates, leading to liquid-liquid phase separation (LLPS).</text>
</comment>
<comment type="subunit">
    <text evidence="2">Forms homooligomers. Forms heterodimers with G3BP1. Interacts with NFKBIA (via N-terminus). Interacts (via NTF2 domain) with USP10; inhibiting stress granule formation. Interacts (via NTF2 domain) with CAPRIN1; promoting stress granule formation. Associates (via RG-rich region) with 40S ribosome subunits. Interacts with PABPC1.</text>
</comment>
<comment type="subcellular location">
    <subcellularLocation>
        <location evidence="2">Cytoplasm</location>
    </subcellularLocation>
    <subcellularLocation>
        <location evidence="2">Cytoplasm</location>
        <location evidence="2">Stress granule</location>
    </subcellularLocation>
</comment>
<comment type="alternative products">
    <event type="alternative splicing"/>
    <isoform>
        <id>P97379-1</id>
        <name>A</name>
        <sequence type="displayed"/>
    </isoform>
    <isoform>
        <id>P97379-2</id>
        <name>B</name>
        <sequence type="described" ref="VSP_003606"/>
    </isoform>
</comment>
<comment type="domain">
    <text evidence="1">Can mediate both protein-protein and protein-RNA interactions via the NTF2 domain and RNA-binding domain RRM; protein-protein and protein-RNA interactions are essential for undergoing liquid-liquid phase separation (LLPS).</text>
</comment>
<comment type="domain">
    <text evidence="1">The acidic disordered region acts as a negative regulator of phase separation.</text>
</comment>
<comment type="domain">
    <text evidence="1">The NTF2 domain mediates interaction with CAPRIN1 and USP10 regulators, thereby regulating assembly of stress granules.</text>
</comment>
<comment type="sequence caution" evidence="8">
    <conflict type="erroneous initiation">
        <sequence resource="EMBL-CDS" id="BAE26595"/>
    </conflict>
</comment>
<feature type="chain" id="PRO_0000194801" description="Ras GTPase-activating protein-binding protein 2">
    <location>
        <begin position="1"/>
        <end position="482"/>
    </location>
</feature>
<feature type="domain" description="NTF2" evidence="3">
    <location>
        <begin position="11"/>
        <end position="133"/>
    </location>
</feature>
<feature type="domain" description="RRM" evidence="4">
    <location>
        <begin position="331"/>
        <end position="409"/>
    </location>
</feature>
<feature type="region of interest" description="Disordered" evidence="5">
    <location>
        <begin position="140"/>
        <end position="170"/>
    </location>
</feature>
<feature type="region of interest" description="Acidic disordered region" evidence="1">
    <location>
        <begin position="142"/>
        <end position="220"/>
    </location>
</feature>
<feature type="region of interest" description="Disordered" evidence="5">
    <location>
        <begin position="187"/>
        <end position="318"/>
    </location>
</feature>
<feature type="region of interest" description="RG-rich region" evidence="1">
    <location>
        <begin position="404"/>
        <end position="476"/>
    </location>
</feature>
<feature type="region of interest" description="Disordered" evidence="5">
    <location>
        <begin position="408"/>
        <end position="482"/>
    </location>
</feature>
<feature type="compositionally biased region" description="Acidic residues" evidence="5">
    <location>
        <begin position="140"/>
        <end position="158"/>
    </location>
</feature>
<feature type="compositionally biased region" description="Basic and acidic residues" evidence="5">
    <location>
        <begin position="191"/>
        <end position="225"/>
    </location>
</feature>
<feature type="compositionally biased region" description="Polar residues" evidence="5">
    <location>
        <begin position="247"/>
        <end position="264"/>
    </location>
</feature>
<feature type="compositionally biased region" description="Basic and acidic residues" evidence="5">
    <location>
        <begin position="290"/>
        <end position="300"/>
    </location>
</feature>
<feature type="compositionally biased region" description="Basic and acidic residues" evidence="5">
    <location>
        <begin position="408"/>
        <end position="432"/>
    </location>
</feature>
<feature type="compositionally biased region" description="Gly residues" evidence="5">
    <location>
        <begin position="433"/>
        <end position="445"/>
    </location>
</feature>
<feature type="modified residue" description="Phosphoserine" evidence="10">
    <location>
        <position position="141"/>
    </location>
</feature>
<feature type="modified residue" description="Phosphoserine" evidence="10">
    <location>
        <position position="149"/>
    </location>
</feature>
<feature type="modified residue" description="Phosphoserine" evidence="10">
    <location>
        <position position="225"/>
    </location>
</feature>
<feature type="modified residue" description="Phosphothreonine" evidence="10">
    <location>
        <position position="227"/>
    </location>
</feature>
<feature type="modified residue" description="N6-succinyllysine" evidence="11">
    <location>
        <position position="392"/>
    </location>
</feature>
<feature type="modified residue" description="Omega-N-methylarginine" evidence="2">
    <location>
        <position position="457"/>
    </location>
</feature>
<feature type="modified residue" description="Phosphoserine" evidence="2">
    <location>
        <position position="466"/>
    </location>
</feature>
<feature type="modified residue" description="Omega-N-methylarginine" evidence="12">
    <location>
        <position position="468"/>
    </location>
</feature>
<feature type="cross-link" description="Glycyl lysine isopeptide (Lys-Gly) (interchain with G-Cter in SUMO2)" evidence="2">
    <location>
        <position position="281"/>
    </location>
</feature>
<feature type="splice variant" id="VSP_003606" description="In isoform B." evidence="6 7">
    <location>
        <begin position="243"/>
        <end position="275"/>
    </location>
</feature>
<feature type="sequence conflict" description="In Ref. 1; AAC53553." evidence="8" ref="1">
    <original>RFTGQRR</original>
    <variation>TLHRTASLKSHCWQFWQWYLTHRVCILVKFFWLWNVTQPF</variation>
    <location>
        <begin position="476"/>
        <end position="482"/>
    </location>
</feature>
<feature type="modified residue" description="Phosphoserine" evidence="9">
    <location sequence="P97379-2">
        <position position="225"/>
    </location>
</feature>
<feature type="modified residue" description="Phosphothreonine" evidence="9">
    <location sequence="P97379-2">
        <position position="227"/>
    </location>
</feature>
<reference key="1">
    <citation type="journal article" date="1996" name="Biomed. Pept. Proteins Nucleic Acids">
        <title>Identification of a mouse orthologue of the human ras-GAP-SH3-domain binding protein and structural confirmation that these proteins contain an RNA recognition motif.</title>
        <authorList>
            <person name="Kennedy D."/>
            <person name="Wood S.A."/>
            <person name="Ramsdale T."/>
            <person name="Tam P.P."/>
            <person name="Steiner K.A."/>
            <person name="Mattick J.S."/>
        </authorList>
    </citation>
    <scope>NUCLEOTIDE SEQUENCE [MRNA] (ISOFORM B)</scope>
</reference>
<reference key="2">
    <citation type="submission" date="1999-04" db="EMBL/GenBank/DDBJ databases">
        <title>Characterisation and chromosomal location of G3BP-1 and G3BP-2a/b, members of a novel SH3 domain-binding and RNA-binding protein family implicated in signal transduction.</title>
        <authorList>
            <person name="Kennedy D."/>
            <person name="Mattick J.S."/>
        </authorList>
    </citation>
    <scope>NUCLEOTIDE SEQUENCE [MRNA] (ISOFORMS A AND B)</scope>
</reference>
<reference key="3">
    <citation type="journal article" date="2005" name="Science">
        <title>The transcriptional landscape of the mammalian genome.</title>
        <authorList>
            <person name="Carninci P."/>
            <person name="Kasukawa T."/>
            <person name="Katayama S."/>
            <person name="Gough J."/>
            <person name="Frith M.C."/>
            <person name="Maeda N."/>
            <person name="Oyama R."/>
            <person name="Ravasi T."/>
            <person name="Lenhard B."/>
            <person name="Wells C."/>
            <person name="Kodzius R."/>
            <person name="Shimokawa K."/>
            <person name="Bajic V.B."/>
            <person name="Brenner S.E."/>
            <person name="Batalov S."/>
            <person name="Forrest A.R."/>
            <person name="Zavolan M."/>
            <person name="Davis M.J."/>
            <person name="Wilming L.G."/>
            <person name="Aidinis V."/>
            <person name="Allen J.E."/>
            <person name="Ambesi-Impiombato A."/>
            <person name="Apweiler R."/>
            <person name="Aturaliya R.N."/>
            <person name="Bailey T.L."/>
            <person name="Bansal M."/>
            <person name="Baxter L."/>
            <person name="Beisel K.W."/>
            <person name="Bersano T."/>
            <person name="Bono H."/>
            <person name="Chalk A.M."/>
            <person name="Chiu K.P."/>
            <person name="Choudhary V."/>
            <person name="Christoffels A."/>
            <person name="Clutterbuck D.R."/>
            <person name="Crowe M.L."/>
            <person name="Dalla E."/>
            <person name="Dalrymple B.P."/>
            <person name="de Bono B."/>
            <person name="Della Gatta G."/>
            <person name="di Bernardo D."/>
            <person name="Down T."/>
            <person name="Engstrom P."/>
            <person name="Fagiolini M."/>
            <person name="Faulkner G."/>
            <person name="Fletcher C.F."/>
            <person name="Fukushima T."/>
            <person name="Furuno M."/>
            <person name="Futaki S."/>
            <person name="Gariboldi M."/>
            <person name="Georgii-Hemming P."/>
            <person name="Gingeras T.R."/>
            <person name="Gojobori T."/>
            <person name="Green R.E."/>
            <person name="Gustincich S."/>
            <person name="Harbers M."/>
            <person name="Hayashi Y."/>
            <person name="Hensch T.K."/>
            <person name="Hirokawa N."/>
            <person name="Hill D."/>
            <person name="Huminiecki L."/>
            <person name="Iacono M."/>
            <person name="Ikeo K."/>
            <person name="Iwama A."/>
            <person name="Ishikawa T."/>
            <person name="Jakt M."/>
            <person name="Kanapin A."/>
            <person name="Katoh M."/>
            <person name="Kawasawa Y."/>
            <person name="Kelso J."/>
            <person name="Kitamura H."/>
            <person name="Kitano H."/>
            <person name="Kollias G."/>
            <person name="Krishnan S.P."/>
            <person name="Kruger A."/>
            <person name="Kummerfeld S.K."/>
            <person name="Kurochkin I.V."/>
            <person name="Lareau L.F."/>
            <person name="Lazarevic D."/>
            <person name="Lipovich L."/>
            <person name="Liu J."/>
            <person name="Liuni S."/>
            <person name="McWilliam S."/>
            <person name="Madan Babu M."/>
            <person name="Madera M."/>
            <person name="Marchionni L."/>
            <person name="Matsuda H."/>
            <person name="Matsuzawa S."/>
            <person name="Miki H."/>
            <person name="Mignone F."/>
            <person name="Miyake S."/>
            <person name="Morris K."/>
            <person name="Mottagui-Tabar S."/>
            <person name="Mulder N."/>
            <person name="Nakano N."/>
            <person name="Nakauchi H."/>
            <person name="Ng P."/>
            <person name="Nilsson R."/>
            <person name="Nishiguchi S."/>
            <person name="Nishikawa S."/>
            <person name="Nori F."/>
            <person name="Ohara O."/>
            <person name="Okazaki Y."/>
            <person name="Orlando V."/>
            <person name="Pang K.C."/>
            <person name="Pavan W.J."/>
            <person name="Pavesi G."/>
            <person name="Pesole G."/>
            <person name="Petrovsky N."/>
            <person name="Piazza S."/>
            <person name="Reed J."/>
            <person name="Reid J.F."/>
            <person name="Ring B.Z."/>
            <person name="Ringwald M."/>
            <person name="Rost B."/>
            <person name="Ruan Y."/>
            <person name="Salzberg S.L."/>
            <person name="Sandelin A."/>
            <person name="Schneider C."/>
            <person name="Schoenbach C."/>
            <person name="Sekiguchi K."/>
            <person name="Semple C.A."/>
            <person name="Seno S."/>
            <person name="Sessa L."/>
            <person name="Sheng Y."/>
            <person name="Shibata Y."/>
            <person name="Shimada H."/>
            <person name="Shimada K."/>
            <person name="Silva D."/>
            <person name="Sinclair B."/>
            <person name="Sperling S."/>
            <person name="Stupka E."/>
            <person name="Sugiura K."/>
            <person name="Sultana R."/>
            <person name="Takenaka Y."/>
            <person name="Taki K."/>
            <person name="Tammoja K."/>
            <person name="Tan S.L."/>
            <person name="Tang S."/>
            <person name="Taylor M.S."/>
            <person name="Tegner J."/>
            <person name="Teichmann S.A."/>
            <person name="Ueda H.R."/>
            <person name="van Nimwegen E."/>
            <person name="Verardo R."/>
            <person name="Wei C.L."/>
            <person name="Yagi K."/>
            <person name="Yamanishi H."/>
            <person name="Zabarovsky E."/>
            <person name="Zhu S."/>
            <person name="Zimmer A."/>
            <person name="Hide W."/>
            <person name="Bult C."/>
            <person name="Grimmond S.M."/>
            <person name="Teasdale R.D."/>
            <person name="Liu E.T."/>
            <person name="Brusic V."/>
            <person name="Quackenbush J."/>
            <person name="Wahlestedt C."/>
            <person name="Mattick J.S."/>
            <person name="Hume D.A."/>
            <person name="Kai C."/>
            <person name="Sasaki D."/>
            <person name="Tomaru Y."/>
            <person name="Fukuda S."/>
            <person name="Kanamori-Katayama M."/>
            <person name="Suzuki M."/>
            <person name="Aoki J."/>
            <person name="Arakawa T."/>
            <person name="Iida J."/>
            <person name="Imamura K."/>
            <person name="Itoh M."/>
            <person name="Kato T."/>
            <person name="Kawaji H."/>
            <person name="Kawagashira N."/>
            <person name="Kawashima T."/>
            <person name="Kojima M."/>
            <person name="Kondo S."/>
            <person name="Konno H."/>
            <person name="Nakano K."/>
            <person name="Ninomiya N."/>
            <person name="Nishio T."/>
            <person name="Okada M."/>
            <person name="Plessy C."/>
            <person name="Shibata K."/>
            <person name="Shiraki T."/>
            <person name="Suzuki S."/>
            <person name="Tagami M."/>
            <person name="Waki K."/>
            <person name="Watahiki A."/>
            <person name="Okamura-Oho Y."/>
            <person name="Suzuki H."/>
            <person name="Kawai J."/>
            <person name="Hayashizaki Y."/>
        </authorList>
    </citation>
    <scope>NUCLEOTIDE SEQUENCE [LARGE SCALE MRNA] (ISOFORM A)</scope>
    <source>
        <strain>C57BL/6J</strain>
    </source>
</reference>
<reference key="4">
    <citation type="journal article" date="2004" name="Mol. Cell. Proteomics">
        <title>Phosphoproteomic analysis of the developing mouse brain.</title>
        <authorList>
            <person name="Ballif B.A."/>
            <person name="Villen J."/>
            <person name="Beausoleil S.A."/>
            <person name="Schwartz D."/>
            <person name="Gygi S.P."/>
        </authorList>
    </citation>
    <scope>IDENTIFICATION BY MASS SPECTROMETRY [LARGE SCALE ANALYSIS]</scope>
    <source>
        <tissue>Embryonic brain</tissue>
    </source>
</reference>
<reference key="5">
    <citation type="journal article" date="2007" name="Proc. Natl. Acad. Sci. U.S.A.">
        <title>Large-scale phosphorylation analysis of mouse liver.</title>
        <authorList>
            <person name="Villen J."/>
            <person name="Beausoleil S.A."/>
            <person name="Gerber S.A."/>
            <person name="Gygi S.P."/>
        </authorList>
    </citation>
    <scope>PHOSPHORYLATION [LARGE SCALE ANALYSIS] AT SER-225 AND THR-227 (ISOFORM B)</scope>
    <scope>IDENTIFICATION BY MASS SPECTROMETRY [LARGE SCALE ANALYSIS]</scope>
    <source>
        <tissue>Liver</tissue>
    </source>
</reference>
<reference key="6">
    <citation type="journal article" date="2009" name="Immunity">
        <title>The phagosomal proteome in interferon-gamma-activated macrophages.</title>
        <authorList>
            <person name="Trost M."/>
            <person name="English L."/>
            <person name="Lemieux S."/>
            <person name="Courcelles M."/>
            <person name="Desjardins M."/>
            <person name="Thibault P."/>
        </authorList>
    </citation>
    <scope>IDENTIFICATION BY MASS SPECTROMETRY [LARGE SCALE ANALYSIS]</scope>
</reference>
<reference key="7">
    <citation type="journal article" date="2009" name="Mol. Cell. Proteomics">
        <title>Large scale localization of protein phosphorylation by use of electron capture dissociation mass spectrometry.</title>
        <authorList>
            <person name="Sweet S.M."/>
            <person name="Bailey C.M."/>
            <person name="Cunningham D.L."/>
            <person name="Heath J.K."/>
            <person name="Cooper H.J."/>
        </authorList>
    </citation>
    <scope>IDENTIFICATION BY MASS SPECTROMETRY [LARGE SCALE ANALYSIS]</scope>
    <source>
        <tissue>Embryonic fibroblast</tissue>
    </source>
</reference>
<reference key="8">
    <citation type="journal article" date="2010" name="Cell">
        <title>A tissue-specific atlas of mouse protein phosphorylation and expression.</title>
        <authorList>
            <person name="Huttlin E.L."/>
            <person name="Jedrychowski M.P."/>
            <person name="Elias J.E."/>
            <person name="Goswami T."/>
            <person name="Rad R."/>
            <person name="Beausoleil S.A."/>
            <person name="Villen J."/>
            <person name="Haas W."/>
            <person name="Sowa M.E."/>
            <person name="Gygi S.P."/>
        </authorList>
    </citation>
    <scope>PHOSPHORYLATION [LARGE SCALE ANALYSIS] AT SER-141; SER-149; SER-225 AND THR-227</scope>
    <scope>IDENTIFICATION BY MASS SPECTROMETRY [LARGE SCALE ANALYSIS]</scope>
    <source>
        <tissue>Brain</tissue>
        <tissue>Brown adipose tissue</tissue>
        <tissue>Heart</tissue>
        <tissue>Kidney</tissue>
        <tissue>Liver</tissue>
        <tissue>Lung</tissue>
        <tissue>Pancreas</tissue>
        <tissue>Spleen</tissue>
        <tissue>Testis</tissue>
    </source>
</reference>
<reference key="9">
    <citation type="journal article" date="2013" name="Mol. Cell">
        <title>SIRT5-mediated lysine desuccinylation impacts diverse metabolic pathways.</title>
        <authorList>
            <person name="Park J."/>
            <person name="Chen Y."/>
            <person name="Tishkoff D.X."/>
            <person name="Peng C."/>
            <person name="Tan M."/>
            <person name="Dai L."/>
            <person name="Xie Z."/>
            <person name="Zhang Y."/>
            <person name="Zwaans B.M."/>
            <person name="Skinner M.E."/>
            <person name="Lombard D.B."/>
            <person name="Zhao Y."/>
        </authorList>
    </citation>
    <scope>SUCCINYLATION [LARGE SCALE ANALYSIS] AT LYS-392</scope>
    <scope>IDENTIFICATION BY MASS SPECTROMETRY [LARGE SCALE ANALYSIS]</scope>
    <source>
        <tissue>Embryonic fibroblast</tissue>
    </source>
</reference>
<reference key="10">
    <citation type="journal article" date="2014" name="Mol. Cell. Proteomics">
        <title>Immunoaffinity enrichment and mass spectrometry analysis of protein methylation.</title>
        <authorList>
            <person name="Guo A."/>
            <person name="Gu H."/>
            <person name="Zhou J."/>
            <person name="Mulhern D."/>
            <person name="Wang Y."/>
            <person name="Lee K.A."/>
            <person name="Yang V."/>
            <person name="Aguiar M."/>
            <person name="Kornhauser J."/>
            <person name="Jia X."/>
            <person name="Ren J."/>
            <person name="Beausoleil S.A."/>
            <person name="Silva J.C."/>
            <person name="Vemulapalli V."/>
            <person name="Bedford M.T."/>
            <person name="Comb M.J."/>
        </authorList>
    </citation>
    <scope>METHYLATION [LARGE SCALE ANALYSIS] AT ARG-468</scope>
    <scope>IDENTIFICATION BY MASS SPECTROMETRY [LARGE SCALE ANALYSIS]</scope>
    <source>
        <tissue>Brain</tissue>
        <tissue>Embryo</tissue>
    </source>
</reference>
<dbReference type="EMBL" id="U65313">
    <property type="protein sequence ID" value="AAC53553.1"/>
    <property type="molecule type" value="mRNA"/>
</dbReference>
<dbReference type="EMBL" id="AF145285">
    <property type="protein sequence ID" value="AAD51933.1"/>
    <property type="molecule type" value="mRNA"/>
</dbReference>
<dbReference type="EMBL" id="AK145697">
    <property type="protein sequence ID" value="BAE26595.1"/>
    <property type="status" value="ALT_INIT"/>
    <property type="molecule type" value="mRNA"/>
</dbReference>
<dbReference type="CCDS" id="CCDS19427.1">
    <molecule id="P97379-1"/>
</dbReference>
<dbReference type="CCDS" id="CCDS39149.1">
    <molecule id="P97379-2"/>
</dbReference>
<dbReference type="RefSeq" id="NP_001074263.1">
    <molecule id="P97379-1"/>
    <property type="nucleotide sequence ID" value="NM_001080794.2"/>
</dbReference>
<dbReference type="RefSeq" id="NP_001074264.1">
    <molecule id="P97379-2"/>
    <property type="nucleotide sequence ID" value="NM_001080795.2"/>
</dbReference>
<dbReference type="RefSeq" id="NP_001074265.1">
    <molecule id="P97379-2"/>
    <property type="nucleotide sequence ID" value="NM_001080796.2"/>
</dbReference>
<dbReference type="RefSeq" id="NP_001074266.1">
    <molecule id="P97379-1"/>
    <property type="nucleotide sequence ID" value="NM_001080797.2"/>
</dbReference>
<dbReference type="RefSeq" id="NP_001346124.1">
    <molecule id="P97379-1"/>
    <property type="nucleotide sequence ID" value="NM_001359195.1"/>
</dbReference>
<dbReference type="RefSeq" id="NP_001346125.1">
    <molecule id="P97379-1"/>
    <property type="nucleotide sequence ID" value="NM_001359196.1"/>
</dbReference>
<dbReference type="RefSeq" id="NP_001346126.1">
    <molecule id="P97379-2"/>
    <property type="nucleotide sequence ID" value="NM_001359197.1"/>
</dbReference>
<dbReference type="RefSeq" id="NP_035946.2">
    <molecule id="P97379-1"/>
    <property type="nucleotide sequence ID" value="NM_011816.4"/>
</dbReference>
<dbReference type="RefSeq" id="XP_006534990.1">
    <property type="nucleotide sequence ID" value="XM_006534927.3"/>
</dbReference>
<dbReference type="RefSeq" id="XP_006534991.1">
    <property type="nucleotide sequence ID" value="XM_006534928.3"/>
</dbReference>
<dbReference type="RefSeq" id="XP_030110327.1">
    <molecule id="P97379-2"/>
    <property type="nucleotide sequence ID" value="XM_030254467.1"/>
</dbReference>
<dbReference type="SMR" id="P97379"/>
<dbReference type="BioGRID" id="204773">
    <property type="interactions" value="37"/>
</dbReference>
<dbReference type="FunCoup" id="P97379">
    <property type="interactions" value="3044"/>
</dbReference>
<dbReference type="IntAct" id="P97379">
    <property type="interactions" value="6"/>
</dbReference>
<dbReference type="MINT" id="P97379"/>
<dbReference type="STRING" id="10090.ENSMUSP00000128353"/>
<dbReference type="GlyGen" id="P97379">
    <property type="glycosylation" value="3 sites, 1 O-linked glycan (3 sites)"/>
</dbReference>
<dbReference type="iPTMnet" id="P97379"/>
<dbReference type="PhosphoSitePlus" id="P97379"/>
<dbReference type="SwissPalm" id="P97379"/>
<dbReference type="jPOST" id="P97379"/>
<dbReference type="PaxDb" id="10090-ENSMUSP00000128244"/>
<dbReference type="PeptideAtlas" id="P97379"/>
<dbReference type="ProteomicsDB" id="273018">
    <molecule id="P97379-1"/>
</dbReference>
<dbReference type="ProteomicsDB" id="273019">
    <molecule id="P97379-2"/>
</dbReference>
<dbReference type="Pumba" id="P97379"/>
<dbReference type="Antibodypedia" id="13391">
    <property type="antibodies" value="156 antibodies from 27 providers"/>
</dbReference>
<dbReference type="DNASU" id="23881"/>
<dbReference type="Ensembl" id="ENSMUST00000113127.7">
    <molecule id="P97379-2"/>
    <property type="protein sequence ID" value="ENSMUSP00000108752.4"/>
    <property type="gene ID" value="ENSMUSG00000029405.17"/>
</dbReference>
<dbReference type="Ensembl" id="ENSMUST00000164378.8">
    <molecule id="P97379-1"/>
    <property type="protein sequence ID" value="ENSMUSP00000128353.2"/>
    <property type="gene ID" value="ENSMUSG00000029405.17"/>
</dbReference>
<dbReference type="Ensembl" id="ENSMUST00000167918.8">
    <molecule id="P97379-2"/>
    <property type="protein sequence ID" value="ENSMUSP00000132469.2"/>
    <property type="gene ID" value="ENSMUSG00000029405.17"/>
</dbReference>
<dbReference type="Ensembl" id="ENSMUST00000169094.8">
    <molecule id="P97379-1"/>
    <property type="protein sequence ID" value="ENSMUSP00000128244.2"/>
    <property type="gene ID" value="ENSMUSG00000029405.17"/>
</dbReference>
<dbReference type="Ensembl" id="ENSMUST00000202258.4">
    <molecule id="P97379-1"/>
    <property type="protein sequence ID" value="ENSMUSP00000144456.2"/>
    <property type="gene ID" value="ENSMUSG00000029405.17"/>
</dbReference>
<dbReference type="GeneID" id="23881"/>
<dbReference type="KEGG" id="mmu:23881"/>
<dbReference type="UCSC" id="uc008ycg.2">
    <molecule id="P97379-1"/>
    <property type="organism name" value="mouse"/>
</dbReference>
<dbReference type="AGR" id="MGI:2442040"/>
<dbReference type="CTD" id="9908"/>
<dbReference type="MGI" id="MGI:2442040">
    <property type="gene designation" value="G3bp2"/>
</dbReference>
<dbReference type="VEuPathDB" id="HostDB:ENSMUSG00000029405"/>
<dbReference type="eggNOG" id="KOG0116">
    <property type="taxonomic scope" value="Eukaryota"/>
</dbReference>
<dbReference type="GeneTree" id="ENSGT00390000011365"/>
<dbReference type="HOGENOM" id="CLU_022209_0_2_1"/>
<dbReference type="InParanoid" id="P97379"/>
<dbReference type="OMA" id="RPRGNAY"/>
<dbReference type="OrthoDB" id="339151at2759"/>
<dbReference type="PhylomeDB" id="P97379"/>
<dbReference type="TreeFam" id="TF325464"/>
<dbReference type="BioGRID-ORCS" id="23881">
    <property type="hits" value="2 hits in 77 CRISPR screens"/>
</dbReference>
<dbReference type="ChiTaRS" id="G3bp2">
    <property type="organism name" value="mouse"/>
</dbReference>
<dbReference type="PRO" id="PR:P97379"/>
<dbReference type="Proteomes" id="UP000000589">
    <property type="component" value="Chromosome 5"/>
</dbReference>
<dbReference type="RNAct" id="P97379">
    <property type="molecule type" value="protein"/>
</dbReference>
<dbReference type="Bgee" id="ENSMUSG00000029405">
    <property type="expression patterns" value="Expressed in animal zygote and 271 other cell types or tissues"/>
</dbReference>
<dbReference type="ExpressionAtlas" id="P97379">
    <property type="expression patterns" value="baseline and differential"/>
</dbReference>
<dbReference type="GO" id="GO:0010494">
    <property type="term" value="C:cytoplasmic stress granule"/>
    <property type="evidence" value="ECO:0007669"/>
    <property type="project" value="UniProtKB-SubCell"/>
</dbReference>
<dbReference type="GO" id="GO:0005829">
    <property type="term" value="C:cytosol"/>
    <property type="evidence" value="ECO:0007669"/>
    <property type="project" value="Ensembl"/>
</dbReference>
<dbReference type="GO" id="GO:0140693">
    <property type="term" value="F:molecular condensate scaffold activity"/>
    <property type="evidence" value="ECO:0000250"/>
    <property type="project" value="UniProtKB"/>
</dbReference>
<dbReference type="GO" id="GO:0003723">
    <property type="term" value="F:RNA binding"/>
    <property type="evidence" value="ECO:0007669"/>
    <property type="project" value="UniProtKB-KW"/>
</dbReference>
<dbReference type="GO" id="GO:0045087">
    <property type="term" value="P:innate immune response"/>
    <property type="evidence" value="ECO:0007669"/>
    <property type="project" value="UniProtKB-KW"/>
</dbReference>
<dbReference type="GO" id="GO:0051028">
    <property type="term" value="P:mRNA transport"/>
    <property type="evidence" value="ECO:0007669"/>
    <property type="project" value="UniProtKB-KW"/>
</dbReference>
<dbReference type="GO" id="GO:0051260">
    <property type="term" value="P:protein homooligomerization"/>
    <property type="evidence" value="ECO:0007669"/>
    <property type="project" value="Ensembl"/>
</dbReference>
<dbReference type="GO" id="GO:0007264">
    <property type="term" value="P:small GTPase-mediated signal transduction"/>
    <property type="evidence" value="ECO:0000266"/>
    <property type="project" value="MGI"/>
</dbReference>
<dbReference type="GO" id="GO:0034063">
    <property type="term" value="P:stress granule assembly"/>
    <property type="evidence" value="ECO:0000250"/>
    <property type="project" value="UniProtKB"/>
</dbReference>
<dbReference type="CDD" id="cd00780">
    <property type="entry name" value="NTF2"/>
    <property type="match status" value="1"/>
</dbReference>
<dbReference type="CDD" id="cd12464">
    <property type="entry name" value="RRM_G3BP2"/>
    <property type="match status" value="1"/>
</dbReference>
<dbReference type="FunFam" id="3.10.450.50:FF:000002">
    <property type="entry name" value="Ras GTPase-activating protein-binding protein 2 isoform 1"/>
    <property type="match status" value="1"/>
</dbReference>
<dbReference type="FunFam" id="3.30.70.330:FF:000327">
    <property type="entry name" value="ras GTPase-activating protein-binding protein 2 isoform X1"/>
    <property type="match status" value="1"/>
</dbReference>
<dbReference type="Gene3D" id="3.10.450.50">
    <property type="match status" value="1"/>
</dbReference>
<dbReference type="Gene3D" id="3.30.70.330">
    <property type="match status" value="1"/>
</dbReference>
<dbReference type="InterPro" id="IPR034376">
    <property type="entry name" value="G3BP2_RRM"/>
</dbReference>
<dbReference type="InterPro" id="IPR032710">
    <property type="entry name" value="NTF2-like_dom_sf"/>
</dbReference>
<dbReference type="InterPro" id="IPR002075">
    <property type="entry name" value="NTF2_dom"/>
</dbReference>
<dbReference type="InterPro" id="IPR018222">
    <property type="entry name" value="Nuclear_transport_factor_2_euk"/>
</dbReference>
<dbReference type="InterPro" id="IPR012677">
    <property type="entry name" value="Nucleotide-bd_a/b_plait_sf"/>
</dbReference>
<dbReference type="InterPro" id="IPR039539">
    <property type="entry name" value="Ras_GTPase_bind_prot"/>
</dbReference>
<dbReference type="InterPro" id="IPR035979">
    <property type="entry name" value="RBD_domain_sf"/>
</dbReference>
<dbReference type="InterPro" id="IPR000504">
    <property type="entry name" value="RRM_dom"/>
</dbReference>
<dbReference type="PANTHER" id="PTHR10693">
    <property type="entry name" value="RAS GTPASE-ACTIVATING PROTEIN-BINDING PROTEIN"/>
    <property type="match status" value="1"/>
</dbReference>
<dbReference type="PANTHER" id="PTHR10693:SF10">
    <property type="entry name" value="RAS GTPASE-ACTIVATING PROTEIN-BINDING PROTEIN 2"/>
    <property type="match status" value="1"/>
</dbReference>
<dbReference type="Pfam" id="PF02136">
    <property type="entry name" value="NTF2"/>
    <property type="match status" value="1"/>
</dbReference>
<dbReference type="Pfam" id="PF00076">
    <property type="entry name" value="RRM_1"/>
    <property type="match status" value="1"/>
</dbReference>
<dbReference type="SMART" id="SM00360">
    <property type="entry name" value="RRM"/>
    <property type="match status" value="1"/>
</dbReference>
<dbReference type="SUPFAM" id="SSF54427">
    <property type="entry name" value="NTF2-like"/>
    <property type="match status" value="1"/>
</dbReference>
<dbReference type="SUPFAM" id="SSF54928">
    <property type="entry name" value="RNA-binding domain, RBD"/>
    <property type="match status" value="1"/>
</dbReference>
<dbReference type="PROSITE" id="PS50177">
    <property type="entry name" value="NTF2_DOMAIN"/>
    <property type="match status" value="1"/>
</dbReference>
<dbReference type="PROSITE" id="PS50102">
    <property type="entry name" value="RRM"/>
    <property type="match status" value="1"/>
</dbReference>
<organism>
    <name type="scientific">Mus musculus</name>
    <name type="common">Mouse</name>
    <dbReference type="NCBI Taxonomy" id="10090"/>
    <lineage>
        <taxon>Eukaryota</taxon>
        <taxon>Metazoa</taxon>
        <taxon>Chordata</taxon>
        <taxon>Craniata</taxon>
        <taxon>Vertebrata</taxon>
        <taxon>Euteleostomi</taxon>
        <taxon>Mammalia</taxon>
        <taxon>Eutheria</taxon>
        <taxon>Euarchontoglires</taxon>
        <taxon>Glires</taxon>
        <taxon>Rodentia</taxon>
        <taxon>Myomorpha</taxon>
        <taxon>Muroidea</taxon>
        <taxon>Muridae</taxon>
        <taxon>Murinae</taxon>
        <taxon>Mus</taxon>
        <taxon>Mus</taxon>
    </lineage>
</organism>
<evidence type="ECO:0000250" key="1">
    <source>
        <dbReference type="UniProtKB" id="Q13283"/>
    </source>
</evidence>
<evidence type="ECO:0000250" key="2">
    <source>
        <dbReference type="UniProtKB" id="Q9UN86"/>
    </source>
</evidence>
<evidence type="ECO:0000255" key="3">
    <source>
        <dbReference type="PROSITE-ProRule" id="PRU00137"/>
    </source>
</evidence>
<evidence type="ECO:0000255" key="4">
    <source>
        <dbReference type="PROSITE-ProRule" id="PRU00176"/>
    </source>
</evidence>
<evidence type="ECO:0000256" key="5">
    <source>
        <dbReference type="SAM" id="MobiDB-lite"/>
    </source>
</evidence>
<evidence type="ECO:0000303" key="6">
    <source>
    </source>
</evidence>
<evidence type="ECO:0000303" key="7">
    <source ref="2"/>
</evidence>
<evidence type="ECO:0000305" key="8"/>
<evidence type="ECO:0007744" key="9">
    <source>
    </source>
</evidence>
<evidence type="ECO:0007744" key="10">
    <source>
    </source>
</evidence>
<evidence type="ECO:0007744" key="11">
    <source>
    </source>
</evidence>
<evidence type="ECO:0007744" key="12">
    <source>
    </source>
</evidence>
<keyword id="KW-0025">Alternative splicing</keyword>
<keyword id="KW-0963">Cytoplasm</keyword>
<keyword id="KW-0391">Immunity</keyword>
<keyword id="KW-0399">Innate immunity</keyword>
<keyword id="KW-1017">Isopeptide bond</keyword>
<keyword id="KW-0488">Methylation</keyword>
<keyword id="KW-0509">mRNA transport</keyword>
<keyword id="KW-0597">Phosphoprotein</keyword>
<keyword id="KW-1185">Reference proteome</keyword>
<keyword id="KW-0694">RNA-binding</keyword>
<keyword id="KW-0813">Transport</keyword>
<keyword id="KW-0832">Ubl conjugation</keyword>